<dbReference type="EC" id="7.6.2.1" evidence="5"/>
<dbReference type="EMBL" id="CU329671">
    <property type="protein sequence ID" value="CAA21897.1"/>
    <property type="molecule type" value="Genomic_DNA"/>
</dbReference>
<dbReference type="PIR" id="T40737">
    <property type="entry name" value="T40737"/>
</dbReference>
<dbReference type="RefSeq" id="NP_596486.1">
    <property type="nucleotide sequence ID" value="NM_001022406.2"/>
</dbReference>
<dbReference type="SMR" id="O94296"/>
<dbReference type="BioGRID" id="277753">
    <property type="interactions" value="2"/>
</dbReference>
<dbReference type="FunCoup" id="O94296">
    <property type="interactions" value="168"/>
</dbReference>
<dbReference type="STRING" id="284812.O94296"/>
<dbReference type="iPTMnet" id="O94296"/>
<dbReference type="PaxDb" id="4896-SPBC887.12.1"/>
<dbReference type="EnsemblFungi" id="SPBC887.12.1">
    <property type="protein sequence ID" value="SPBC887.12.1:pep"/>
    <property type="gene ID" value="SPBC887.12"/>
</dbReference>
<dbReference type="KEGG" id="spo:2541239"/>
<dbReference type="PomBase" id="SPBC887.12"/>
<dbReference type="VEuPathDB" id="FungiDB:SPBC887.12"/>
<dbReference type="eggNOG" id="KOG0206">
    <property type="taxonomic scope" value="Eukaryota"/>
</dbReference>
<dbReference type="HOGENOM" id="CLU_000846_3_0_1"/>
<dbReference type="InParanoid" id="O94296"/>
<dbReference type="OMA" id="MHSFWSW"/>
<dbReference type="PhylomeDB" id="O94296"/>
<dbReference type="Reactome" id="R-SPO-6798695">
    <property type="pathway name" value="Neutrophil degranulation"/>
</dbReference>
<dbReference type="Reactome" id="R-SPO-936837">
    <property type="pathway name" value="Ion transport by P-type ATPases"/>
</dbReference>
<dbReference type="PRO" id="PR:O94296"/>
<dbReference type="Proteomes" id="UP000002485">
    <property type="component" value="Chromosome II"/>
</dbReference>
<dbReference type="GO" id="GO:0005783">
    <property type="term" value="C:endoplasmic reticulum"/>
    <property type="evidence" value="ECO:0007005"/>
    <property type="project" value="PomBase"/>
</dbReference>
<dbReference type="GO" id="GO:0005789">
    <property type="term" value="C:endoplasmic reticulum membrane"/>
    <property type="evidence" value="ECO:0007669"/>
    <property type="project" value="UniProtKB-SubCell"/>
</dbReference>
<dbReference type="GO" id="GO:0005886">
    <property type="term" value="C:plasma membrane"/>
    <property type="evidence" value="ECO:0000318"/>
    <property type="project" value="GO_Central"/>
</dbReference>
<dbReference type="GO" id="GO:0005802">
    <property type="term" value="C:trans-Golgi network"/>
    <property type="evidence" value="ECO:0000318"/>
    <property type="project" value="GO_Central"/>
</dbReference>
<dbReference type="GO" id="GO:0005524">
    <property type="term" value="F:ATP binding"/>
    <property type="evidence" value="ECO:0007669"/>
    <property type="project" value="UniProtKB-KW"/>
</dbReference>
<dbReference type="GO" id="GO:0016887">
    <property type="term" value="F:ATP hydrolysis activity"/>
    <property type="evidence" value="ECO:0007669"/>
    <property type="project" value="InterPro"/>
</dbReference>
<dbReference type="GO" id="GO:0140326">
    <property type="term" value="F:ATPase-coupled intramembrane lipid transporter activity"/>
    <property type="evidence" value="ECO:0000318"/>
    <property type="project" value="GO_Central"/>
</dbReference>
<dbReference type="GO" id="GO:0000287">
    <property type="term" value="F:magnesium ion binding"/>
    <property type="evidence" value="ECO:0007669"/>
    <property type="project" value="InterPro"/>
</dbReference>
<dbReference type="GO" id="GO:0070273">
    <property type="term" value="F:phosphatidylinositol-4-phosphate binding"/>
    <property type="evidence" value="ECO:0000250"/>
    <property type="project" value="UniProtKB"/>
</dbReference>
<dbReference type="GO" id="GO:0140346">
    <property type="term" value="F:phosphatidylserine flippase activity"/>
    <property type="evidence" value="ECO:0000250"/>
    <property type="project" value="UniProtKB"/>
</dbReference>
<dbReference type="GO" id="GO:0090556">
    <property type="term" value="F:phosphatidylserine floppase activity"/>
    <property type="evidence" value="ECO:0007669"/>
    <property type="project" value="RHEA"/>
</dbReference>
<dbReference type="GO" id="GO:0032456">
    <property type="term" value="P:endocytic recycling"/>
    <property type="evidence" value="ECO:0000318"/>
    <property type="project" value="GO_Central"/>
</dbReference>
<dbReference type="GO" id="GO:0045332">
    <property type="term" value="P:phospholipid translocation"/>
    <property type="evidence" value="ECO:0000250"/>
    <property type="project" value="UniProtKB"/>
</dbReference>
<dbReference type="GO" id="GO:0006892">
    <property type="term" value="P:post-Golgi vesicle-mediated transport"/>
    <property type="evidence" value="ECO:0000318"/>
    <property type="project" value="GO_Central"/>
</dbReference>
<dbReference type="CDD" id="cd02073">
    <property type="entry name" value="P-type_ATPase_APLT_Dnf-like"/>
    <property type="match status" value="1"/>
</dbReference>
<dbReference type="FunFam" id="2.70.150.10:FF:000026">
    <property type="entry name" value="Phospholipid-transporting ATPase"/>
    <property type="match status" value="1"/>
</dbReference>
<dbReference type="FunFam" id="3.40.1110.10:FF:000087">
    <property type="entry name" value="Phospholipid-transporting ATPase"/>
    <property type="match status" value="1"/>
</dbReference>
<dbReference type="FunFam" id="3.40.50.1000:FF:000010">
    <property type="entry name" value="Phospholipid-transporting ATPase"/>
    <property type="match status" value="1"/>
</dbReference>
<dbReference type="Gene3D" id="3.40.1110.10">
    <property type="entry name" value="Calcium-transporting ATPase, cytoplasmic domain N"/>
    <property type="match status" value="1"/>
</dbReference>
<dbReference type="Gene3D" id="2.70.150.10">
    <property type="entry name" value="Calcium-transporting ATPase, cytoplasmic transduction domain A"/>
    <property type="match status" value="1"/>
</dbReference>
<dbReference type="Gene3D" id="3.40.50.1000">
    <property type="entry name" value="HAD superfamily/HAD-like"/>
    <property type="match status" value="1"/>
</dbReference>
<dbReference type="InterPro" id="IPR023299">
    <property type="entry name" value="ATPase_P-typ_cyto_dom_N"/>
</dbReference>
<dbReference type="InterPro" id="IPR018303">
    <property type="entry name" value="ATPase_P-typ_P_site"/>
</dbReference>
<dbReference type="InterPro" id="IPR023298">
    <property type="entry name" value="ATPase_P-typ_TM_dom_sf"/>
</dbReference>
<dbReference type="InterPro" id="IPR008250">
    <property type="entry name" value="ATPase_P-typ_transduc_dom_A_sf"/>
</dbReference>
<dbReference type="InterPro" id="IPR036412">
    <property type="entry name" value="HAD-like_sf"/>
</dbReference>
<dbReference type="InterPro" id="IPR023214">
    <property type="entry name" value="HAD_sf"/>
</dbReference>
<dbReference type="InterPro" id="IPR006539">
    <property type="entry name" value="P-type_ATPase_IV"/>
</dbReference>
<dbReference type="InterPro" id="IPR032631">
    <property type="entry name" value="P-type_ATPase_N"/>
</dbReference>
<dbReference type="InterPro" id="IPR001757">
    <property type="entry name" value="P_typ_ATPase"/>
</dbReference>
<dbReference type="InterPro" id="IPR032630">
    <property type="entry name" value="P_typ_ATPase_c"/>
</dbReference>
<dbReference type="InterPro" id="IPR044492">
    <property type="entry name" value="P_typ_ATPase_HD_dom"/>
</dbReference>
<dbReference type="NCBIfam" id="TIGR01652">
    <property type="entry name" value="ATPase-Plipid"/>
    <property type="match status" value="1"/>
</dbReference>
<dbReference type="NCBIfam" id="TIGR01494">
    <property type="entry name" value="ATPase_P-type"/>
    <property type="match status" value="1"/>
</dbReference>
<dbReference type="PANTHER" id="PTHR24092:SF150">
    <property type="entry name" value="PHOSPHOLIPID-TRANSPORTING ATPASE"/>
    <property type="match status" value="1"/>
</dbReference>
<dbReference type="PANTHER" id="PTHR24092">
    <property type="entry name" value="PROBABLE PHOSPHOLIPID-TRANSPORTING ATPASE"/>
    <property type="match status" value="1"/>
</dbReference>
<dbReference type="Pfam" id="PF13246">
    <property type="entry name" value="Cation_ATPase"/>
    <property type="match status" value="1"/>
</dbReference>
<dbReference type="Pfam" id="PF00702">
    <property type="entry name" value="Hydrolase"/>
    <property type="match status" value="1"/>
</dbReference>
<dbReference type="Pfam" id="PF16212">
    <property type="entry name" value="PhoLip_ATPase_C"/>
    <property type="match status" value="1"/>
</dbReference>
<dbReference type="Pfam" id="PF16209">
    <property type="entry name" value="PhoLip_ATPase_N"/>
    <property type="match status" value="1"/>
</dbReference>
<dbReference type="PRINTS" id="PR00119">
    <property type="entry name" value="CATATPASE"/>
</dbReference>
<dbReference type="SFLD" id="SFLDG00002">
    <property type="entry name" value="C1.7:_P-type_atpase_like"/>
    <property type="match status" value="1"/>
</dbReference>
<dbReference type="SFLD" id="SFLDF00027">
    <property type="entry name" value="p-type_atpase"/>
    <property type="match status" value="1"/>
</dbReference>
<dbReference type="SUPFAM" id="SSF81653">
    <property type="entry name" value="Calcium ATPase, transduction domain A"/>
    <property type="match status" value="1"/>
</dbReference>
<dbReference type="SUPFAM" id="SSF81665">
    <property type="entry name" value="Calcium ATPase, transmembrane domain M"/>
    <property type="match status" value="1"/>
</dbReference>
<dbReference type="SUPFAM" id="SSF56784">
    <property type="entry name" value="HAD-like"/>
    <property type="match status" value="1"/>
</dbReference>
<dbReference type="SUPFAM" id="SSF81660">
    <property type="entry name" value="Metal cation-transporting ATPase, ATP-binding domain N"/>
    <property type="match status" value="1"/>
</dbReference>
<dbReference type="PROSITE" id="PS00154">
    <property type="entry name" value="ATPASE_E1_E2"/>
    <property type="match status" value="1"/>
</dbReference>
<comment type="function">
    <text evidence="5">Catalytic component of a P4-ATPase flippase complex which catalyzes the hydrolysis of ATP coupled to the transport of phosphatidylserine and small amounts of ethanolamine from the lumen to the cytosolic leaflet of the trans-Golgi network and ensures the maintenance of asymmetric distribution of phospholipids.</text>
</comment>
<comment type="catalytic activity">
    <reaction evidence="5">
        <text>ATP + H2O + phospholipidSide 1 = ADP + phosphate + phospholipidSide 2.</text>
        <dbReference type="EC" id="7.6.2.1"/>
    </reaction>
</comment>
<comment type="catalytic activity">
    <reaction evidence="5">
        <text>a 1,2-diacyl-sn-glycero-3-phospho-L-serine(out) + ATP + H2O = a 1,2-diacyl-sn-glycero-3-phospho-L-serine(in) + ADP + phosphate + H(+)</text>
        <dbReference type="Rhea" id="RHEA:38567"/>
        <dbReference type="ChEBI" id="CHEBI:15377"/>
        <dbReference type="ChEBI" id="CHEBI:15378"/>
        <dbReference type="ChEBI" id="CHEBI:30616"/>
        <dbReference type="ChEBI" id="CHEBI:43474"/>
        <dbReference type="ChEBI" id="CHEBI:57262"/>
        <dbReference type="ChEBI" id="CHEBI:456216"/>
    </reaction>
    <physiologicalReaction direction="left-to-right" evidence="5">
        <dbReference type="Rhea" id="RHEA:38568"/>
    </physiologicalReaction>
</comment>
<comment type="catalytic activity">
    <reaction evidence="5">
        <text>a 1,2-diacyl-sn-glycero-3-phosphoethanolamine(out) + ATP + H2O = a 1,2-diacyl-sn-glycero-3-phosphoethanolamine(in) + ADP + phosphate + H(+)</text>
        <dbReference type="Rhea" id="RHEA:66132"/>
        <dbReference type="ChEBI" id="CHEBI:15377"/>
        <dbReference type="ChEBI" id="CHEBI:15378"/>
        <dbReference type="ChEBI" id="CHEBI:30616"/>
        <dbReference type="ChEBI" id="CHEBI:43474"/>
        <dbReference type="ChEBI" id="CHEBI:64612"/>
        <dbReference type="ChEBI" id="CHEBI:456216"/>
    </reaction>
    <physiologicalReaction direction="left-to-right" evidence="5">
        <dbReference type="Rhea" id="RHEA:66133"/>
    </physiologicalReaction>
</comment>
<comment type="cofactor">
    <cofactor evidence="5">
        <name>Mg(2+)</name>
        <dbReference type="ChEBI" id="CHEBI:18420"/>
    </cofactor>
</comment>
<comment type="subcellular location">
    <subcellularLocation>
        <location evidence="10">Endoplasmic reticulum membrane</location>
        <topology evidence="10">Multi-pass membrane protein</topology>
    </subcellularLocation>
    <subcellularLocation>
        <location evidence="5">Golgi apparatus</location>
        <location evidence="5">trans-Golgi network membrane</location>
        <topology evidence="8">Multi-pass membrane protein</topology>
    </subcellularLocation>
</comment>
<comment type="similarity">
    <text evidence="11">Belongs to the cation transport ATPase (P-type) (TC 3.A.3) family. Type IV subfamily.</text>
</comment>
<proteinExistence type="inferred from homology"/>
<organism>
    <name type="scientific">Schizosaccharomyces pombe (strain 972 / ATCC 24843)</name>
    <name type="common">Fission yeast</name>
    <dbReference type="NCBI Taxonomy" id="284812"/>
    <lineage>
        <taxon>Eukaryota</taxon>
        <taxon>Fungi</taxon>
        <taxon>Dikarya</taxon>
        <taxon>Ascomycota</taxon>
        <taxon>Taphrinomycotina</taxon>
        <taxon>Schizosaccharomycetes</taxon>
        <taxon>Schizosaccharomycetales</taxon>
        <taxon>Schizosaccharomycetaceae</taxon>
        <taxon>Schizosaccharomyces</taxon>
    </lineage>
</organism>
<gene>
    <name type="ORF">SPBC887.12</name>
</gene>
<protein>
    <recommendedName>
        <fullName>Phospholipid-transporting ATPase C887.12</fullName>
        <ecNumber evidence="5">7.6.2.1</ecNumber>
    </recommendedName>
</protein>
<sequence>MARDVDNKQNAKRISRDEDEDEFAGESMVGRTLDNPFLGEDEFEDIFGSESQYISSSGQNSTNPFLADTRIENSPLGSESKANQLNKQGTNVNHIEIPLRDFNDPTQPESFLPPPKNTFTSRIKKIKNLFKKEKKQVKPEDLGPRQIILNDYSANHFLHNAVSTCKYSAFTFLPKFLKEQFSKYANLFFLFTAVVQQIPGITPVNRYTTIGPMLIVLSVSGIKEIMEDIKRKKQDQELNESPCYVLQGTGFVEKQWKDVVVGDIVKIVSETFFPADLVLLSSSEPEGLCYIETANLDGETNLKIKQALPETAGLLKPVELGQLSGEVKSEQPNNNLYTFDATLKLLPSDRELPLSPDQLLLRGAQLRNTPWVYGIVVFTGHESKLMKNTTETPIKRTSVEKQVNSQILFLLCIFVFLCFASSLGALIHRSVYGSALSYVKYTSNRAGMFFKGLLTFWILYSNLVPISLFVTFELVRYIQAQLISSDLDMYNEETDTPAACRTSSLVEELGQVGYIFSDKTGTLTRNQMEFRQCTIAGVAYADVIPEDRQFTSEDLDSDMYIYDFDTLKENLKHSENASLIHQFLLVLSICHTVIPEYDESTNSIKYQASSPDEGALVKGAASIGYKFLARKPHLVTVSIFGKDESYELLHICEFNSTRKRMSIVFRCPDGKIRLYVKGADTVIMERLASDNPYLQTTIHHLEDYATVGLRTLCIAMREVPEDEYQRWSTVFETAASSLVDRAQKLMDAAEEIEKDLILLGATAIEDRLQDGVPDTISTLQTAGIKIWVLTGDRQETAINIGMSCKLIDEDMGLVIVNEETKEATAESVMAKLSSIYRNEATTGNVESMALVIDGVSLTYALDFSLERRFFELASLCRAVICCRVSPLQKALIVKMVKRNTGEVLLAIGDGANDVPMIQAAHVGVGISGMEGLQAVRSSDFSISQFCYLKKLLLVHGSWCYQRLSKLILYSFYKNIALYMTQFWYAFCNAFSGQVIFESWSISLYNVLFTVLPPVVIGIFDQFVSAGQLFQYPQLYQLGQRSEFFNLKRFWSWITNGFYHSLLLFLCSIAVFYYDGPNKDGLASGHWVWGTTLYAAILATVLGKAALISNHWTQYTVIATLGSFLLWIVFMPIYAVAAPAIGFSKEYYGIIPHLYGNLKFWASLLVLPTIALMRDFVWKYSSRMYYPEEYHYVQEIQKYNVTDYRPRIVGFHKAIRKIRQMQRMRKQRGYAFSQGEEDQSRILDAYDTTHTRGAYGEMR</sequence>
<feature type="chain" id="PRO_0000314112" description="Phospholipid-transporting ATPase C887.12">
    <location>
        <begin position="1"/>
        <end position="1258"/>
    </location>
</feature>
<feature type="topological domain" description="Cytoplasmic" evidence="1">
    <location>
        <begin position="1"/>
        <end position="183"/>
    </location>
</feature>
<feature type="transmembrane region" description="Helical" evidence="8">
    <location>
        <begin position="184"/>
        <end position="204"/>
    </location>
</feature>
<feature type="topological domain" description="Lumenal" evidence="1">
    <location>
        <begin position="205"/>
        <end position="208"/>
    </location>
</feature>
<feature type="transmembrane region" description="Helical" evidence="8">
    <location>
        <begin position="209"/>
        <end position="229"/>
    </location>
</feature>
<feature type="topological domain" description="Cytoplasmic" evidence="1">
    <location>
        <begin position="230"/>
        <end position="406"/>
    </location>
</feature>
<feature type="transmembrane region" description="Helical" evidence="8">
    <location>
        <begin position="407"/>
        <end position="427"/>
    </location>
</feature>
<feature type="topological domain" description="Lumenal" evidence="1">
    <location>
        <begin position="428"/>
        <end position="451"/>
    </location>
</feature>
<feature type="transmembrane region" description="Helical" evidence="8">
    <location>
        <begin position="452"/>
        <end position="472"/>
    </location>
</feature>
<feature type="topological domain" description="Cytoplasmic" evidence="1">
    <location>
        <begin position="473"/>
        <end position="974"/>
    </location>
</feature>
<feature type="transmembrane region" description="Helical" evidence="8">
    <location>
        <begin position="975"/>
        <end position="995"/>
    </location>
</feature>
<feature type="topological domain" description="Lumenal" evidence="1">
    <location>
        <begin position="996"/>
        <end position="998"/>
    </location>
</feature>
<feature type="transmembrane region" description="Helical" evidence="8">
    <location>
        <begin position="999"/>
        <end position="1019"/>
    </location>
</feature>
<feature type="topological domain" description="Cytoplasmic" evidence="1">
    <location>
        <begin position="1020"/>
        <end position="1051"/>
    </location>
</feature>
<feature type="transmembrane region" description="Helical" evidence="8">
    <location>
        <begin position="1052"/>
        <end position="1072"/>
    </location>
</feature>
<feature type="topological domain" description="Lumenal" evidence="1">
    <location>
        <begin position="1073"/>
        <end position="1086"/>
    </location>
</feature>
<feature type="transmembrane region" description="Helical" evidence="8">
    <location>
        <begin position="1087"/>
        <end position="1107"/>
    </location>
</feature>
<feature type="topological domain" description="Cytoplasmic" evidence="1">
    <location>
        <begin position="1108"/>
        <end position="1115"/>
    </location>
</feature>
<feature type="transmembrane region" description="Helical" evidence="8">
    <location>
        <begin position="1116"/>
        <end position="1136"/>
    </location>
</feature>
<feature type="topological domain" description="Lumenal" evidence="1">
    <location>
        <begin position="1137"/>
        <end position="1148"/>
    </location>
</feature>
<feature type="transmembrane region" description="Helical" evidence="8">
    <location>
        <begin position="1149"/>
        <end position="1169"/>
    </location>
</feature>
<feature type="topological domain" description="Cytoplasmic" evidence="1">
    <location>
        <begin position="1170"/>
        <end position="1258"/>
    </location>
</feature>
<feature type="region of interest" description="Disordered" evidence="9">
    <location>
        <begin position="1"/>
        <end position="41"/>
    </location>
</feature>
<feature type="region of interest" description="Disordered" evidence="9">
    <location>
        <begin position="53"/>
        <end position="83"/>
    </location>
</feature>
<feature type="compositionally biased region" description="Polar residues" evidence="9">
    <location>
        <begin position="53"/>
        <end position="64"/>
    </location>
</feature>
<feature type="active site" description="4-aspartylphosphate intermediate" evidence="7">
    <location>
        <position position="518"/>
    </location>
</feature>
<feature type="binding site" evidence="7">
    <location>
        <position position="518"/>
    </location>
    <ligand>
        <name>ATP</name>
        <dbReference type="ChEBI" id="CHEBI:30616"/>
    </ligand>
</feature>
<feature type="binding site" evidence="7">
    <location>
        <position position="518"/>
    </location>
    <ligand>
        <name>Mg(2+)</name>
        <dbReference type="ChEBI" id="CHEBI:18420"/>
    </ligand>
</feature>
<feature type="binding site" evidence="7">
    <location>
        <position position="519"/>
    </location>
    <ligand>
        <name>ATP</name>
        <dbReference type="ChEBI" id="CHEBI:30616"/>
    </ligand>
</feature>
<feature type="binding site" evidence="3">
    <location>
        <position position="520"/>
    </location>
    <ligand>
        <name>ATP</name>
        <dbReference type="ChEBI" id="CHEBI:30616"/>
    </ligand>
</feature>
<feature type="binding site" evidence="7">
    <location>
        <position position="520"/>
    </location>
    <ligand>
        <name>Mg(2+)</name>
        <dbReference type="ChEBI" id="CHEBI:18420"/>
    </ligand>
</feature>
<feature type="binding site" evidence="3">
    <location>
        <position position="613"/>
    </location>
    <ligand>
        <name>ATP</name>
        <dbReference type="ChEBI" id="CHEBI:30616"/>
    </ligand>
</feature>
<feature type="binding site" evidence="7">
    <location>
        <position position="654"/>
    </location>
    <ligand>
        <name>ATP</name>
        <dbReference type="ChEBI" id="CHEBI:30616"/>
    </ligand>
</feature>
<feature type="binding site" evidence="4">
    <location>
        <position position="656"/>
    </location>
    <ligand>
        <name>ATP</name>
        <dbReference type="ChEBI" id="CHEBI:30616"/>
    </ligand>
</feature>
<feature type="binding site" evidence="5">
    <location>
        <position position="659"/>
    </location>
    <ligand>
        <name>ATP</name>
        <dbReference type="ChEBI" id="CHEBI:30616"/>
    </ligand>
</feature>
<feature type="binding site" evidence="3">
    <location>
        <position position="677"/>
    </location>
    <ligand>
        <name>ATP</name>
        <dbReference type="ChEBI" id="CHEBI:30616"/>
    </ligand>
</feature>
<feature type="binding site" evidence="3">
    <location>
        <position position="710"/>
    </location>
    <ligand>
        <name>ATP</name>
        <dbReference type="ChEBI" id="CHEBI:30616"/>
    </ligand>
</feature>
<feature type="binding site" evidence="5">
    <location>
        <position position="711"/>
    </location>
    <ligand>
        <name>ATP</name>
        <dbReference type="ChEBI" id="CHEBI:30616"/>
    </ligand>
</feature>
<feature type="binding site" evidence="3">
    <location>
        <position position="790"/>
    </location>
    <ligand>
        <name>ATP</name>
        <dbReference type="ChEBI" id="CHEBI:30616"/>
    </ligand>
</feature>
<feature type="binding site" evidence="3">
    <location>
        <position position="791"/>
    </location>
    <ligand>
        <name>ATP</name>
        <dbReference type="ChEBI" id="CHEBI:30616"/>
    </ligand>
</feature>
<feature type="binding site" evidence="3">
    <location>
        <position position="792"/>
    </location>
    <ligand>
        <name>ATP</name>
        <dbReference type="ChEBI" id="CHEBI:30616"/>
    </ligand>
</feature>
<feature type="binding site" evidence="3">
    <location>
        <position position="883"/>
    </location>
    <ligand>
        <name>ATP</name>
        <dbReference type="ChEBI" id="CHEBI:30616"/>
    </ligand>
</feature>
<feature type="binding site" evidence="3">
    <location>
        <position position="889"/>
    </location>
    <ligand>
        <name>ATP</name>
        <dbReference type="ChEBI" id="CHEBI:30616"/>
    </ligand>
</feature>
<feature type="binding site" evidence="7">
    <location>
        <position position="909"/>
    </location>
    <ligand>
        <name>Mg(2+)</name>
        <dbReference type="ChEBI" id="CHEBI:18420"/>
    </ligand>
</feature>
<feature type="binding site" evidence="7">
    <location>
        <position position="912"/>
    </location>
    <ligand>
        <name>ATP</name>
        <dbReference type="ChEBI" id="CHEBI:30616"/>
    </ligand>
</feature>
<feature type="binding site" evidence="3">
    <location>
        <position position="913"/>
    </location>
    <ligand>
        <name>ATP</name>
        <dbReference type="ChEBI" id="CHEBI:30616"/>
    </ligand>
</feature>
<feature type="binding site" evidence="6">
    <location>
        <position position="913"/>
    </location>
    <ligand>
        <name>Mg(2+)</name>
        <dbReference type="ChEBI" id="CHEBI:18420"/>
    </ligand>
</feature>
<feature type="binding site" evidence="5">
    <location>
        <position position="1103"/>
    </location>
    <ligand>
        <name>a 1,2-diacyl-sn-glycero-3-phospho-(1D-myo-inositol 4-phosphate)</name>
        <dbReference type="ChEBI" id="CHEBI:58178"/>
    </ligand>
</feature>
<feature type="binding site" evidence="5">
    <location>
        <position position="1173"/>
    </location>
    <ligand>
        <name>a 1,2-diacyl-sn-glycero-3-phospho-(1D-myo-inositol 4-phosphate)</name>
        <dbReference type="ChEBI" id="CHEBI:58178"/>
    </ligand>
</feature>
<feature type="binding site" evidence="5">
    <location>
        <position position="1177"/>
    </location>
    <ligand>
        <name>a 1,2-diacyl-sn-glycero-3-phospho-(1D-myo-inositol 4-phosphate)</name>
        <dbReference type="ChEBI" id="CHEBI:58178"/>
    </ligand>
</feature>
<feature type="binding site" evidence="5">
    <location>
        <position position="1178"/>
    </location>
    <ligand>
        <name>a 1,2-diacyl-sn-glycero-3-phospho-(1D-myo-inositol 4-phosphate)</name>
        <dbReference type="ChEBI" id="CHEBI:58178"/>
    </ligand>
</feature>
<feature type="binding site" evidence="5">
    <location>
        <position position="1189"/>
    </location>
    <ligand>
        <name>a 1,2-diacyl-sn-glycero-3-phospho-(1D-myo-inositol 4-phosphate)</name>
        <dbReference type="ChEBI" id="CHEBI:58178"/>
    </ligand>
</feature>
<feature type="binding site" evidence="5">
    <location>
        <position position="1190"/>
    </location>
    <ligand>
        <name>a 1,2-diacyl-sn-glycero-3-phospho-(1D-myo-inositol 4-phosphate)</name>
        <dbReference type="ChEBI" id="CHEBI:58178"/>
    </ligand>
</feature>
<feature type="site" description="Involved in the release of the transported lipid into the cytosolic leaflet" evidence="2">
    <location>
        <position position="466"/>
    </location>
</feature>
<reference key="1">
    <citation type="journal article" date="2002" name="Nature">
        <title>The genome sequence of Schizosaccharomyces pombe.</title>
        <authorList>
            <person name="Wood V."/>
            <person name="Gwilliam R."/>
            <person name="Rajandream M.A."/>
            <person name="Lyne M.H."/>
            <person name="Lyne R."/>
            <person name="Stewart A."/>
            <person name="Sgouros J.G."/>
            <person name="Peat N."/>
            <person name="Hayles J."/>
            <person name="Baker S.G."/>
            <person name="Basham D."/>
            <person name="Bowman S."/>
            <person name="Brooks K."/>
            <person name="Brown D."/>
            <person name="Brown S."/>
            <person name="Chillingworth T."/>
            <person name="Churcher C.M."/>
            <person name="Collins M."/>
            <person name="Connor R."/>
            <person name="Cronin A."/>
            <person name="Davis P."/>
            <person name="Feltwell T."/>
            <person name="Fraser A."/>
            <person name="Gentles S."/>
            <person name="Goble A."/>
            <person name="Hamlin N."/>
            <person name="Harris D.E."/>
            <person name="Hidalgo J."/>
            <person name="Hodgson G."/>
            <person name="Holroyd S."/>
            <person name="Hornsby T."/>
            <person name="Howarth S."/>
            <person name="Huckle E.J."/>
            <person name="Hunt S."/>
            <person name="Jagels K."/>
            <person name="James K.D."/>
            <person name="Jones L."/>
            <person name="Jones M."/>
            <person name="Leather S."/>
            <person name="McDonald S."/>
            <person name="McLean J."/>
            <person name="Mooney P."/>
            <person name="Moule S."/>
            <person name="Mungall K.L."/>
            <person name="Murphy L.D."/>
            <person name="Niblett D."/>
            <person name="Odell C."/>
            <person name="Oliver K."/>
            <person name="O'Neil S."/>
            <person name="Pearson D."/>
            <person name="Quail M.A."/>
            <person name="Rabbinowitsch E."/>
            <person name="Rutherford K.M."/>
            <person name="Rutter S."/>
            <person name="Saunders D."/>
            <person name="Seeger K."/>
            <person name="Sharp S."/>
            <person name="Skelton J."/>
            <person name="Simmonds M.N."/>
            <person name="Squares R."/>
            <person name="Squares S."/>
            <person name="Stevens K."/>
            <person name="Taylor K."/>
            <person name="Taylor R.G."/>
            <person name="Tivey A."/>
            <person name="Walsh S.V."/>
            <person name="Warren T."/>
            <person name="Whitehead S."/>
            <person name="Woodward J.R."/>
            <person name="Volckaert G."/>
            <person name="Aert R."/>
            <person name="Robben J."/>
            <person name="Grymonprez B."/>
            <person name="Weltjens I."/>
            <person name="Vanstreels E."/>
            <person name="Rieger M."/>
            <person name="Schaefer M."/>
            <person name="Mueller-Auer S."/>
            <person name="Gabel C."/>
            <person name="Fuchs M."/>
            <person name="Duesterhoeft A."/>
            <person name="Fritzc C."/>
            <person name="Holzer E."/>
            <person name="Moestl D."/>
            <person name="Hilbert H."/>
            <person name="Borzym K."/>
            <person name="Langer I."/>
            <person name="Beck A."/>
            <person name="Lehrach H."/>
            <person name="Reinhardt R."/>
            <person name="Pohl T.M."/>
            <person name="Eger P."/>
            <person name="Zimmermann W."/>
            <person name="Wedler H."/>
            <person name="Wambutt R."/>
            <person name="Purnelle B."/>
            <person name="Goffeau A."/>
            <person name="Cadieu E."/>
            <person name="Dreano S."/>
            <person name="Gloux S."/>
            <person name="Lelaure V."/>
            <person name="Mottier S."/>
            <person name="Galibert F."/>
            <person name="Aves S.J."/>
            <person name="Xiang Z."/>
            <person name="Hunt C."/>
            <person name="Moore K."/>
            <person name="Hurst S.M."/>
            <person name="Lucas M."/>
            <person name="Rochet M."/>
            <person name="Gaillardin C."/>
            <person name="Tallada V.A."/>
            <person name="Garzon A."/>
            <person name="Thode G."/>
            <person name="Daga R.R."/>
            <person name="Cruzado L."/>
            <person name="Jimenez J."/>
            <person name="Sanchez M."/>
            <person name="del Rey F."/>
            <person name="Benito J."/>
            <person name="Dominguez A."/>
            <person name="Revuelta J.L."/>
            <person name="Moreno S."/>
            <person name="Armstrong J."/>
            <person name="Forsburg S.L."/>
            <person name="Cerutti L."/>
            <person name="Lowe T."/>
            <person name="McCombie W.R."/>
            <person name="Paulsen I."/>
            <person name="Potashkin J."/>
            <person name="Shpakovski G.V."/>
            <person name="Ussery D."/>
            <person name="Barrell B.G."/>
            <person name="Nurse P."/>
        </authorList>
    </citation>
    <scope>NUCLEOTIDE SEQUENCE [LARGE SCALE GENOMIC DNA]</scope>
    <source>
        <strain>972 / ATCC 24843</strain>
    </source>
</reference>
<reference key="2">
    <citation type="journal article" date="2006" name="Nat. Biotechnol.">
        <title>ORFeome cloning and global analysis of protein localization in the fission yeast Schizosaccharomyces pombe.</title>
        <authorList>
            <person name="Matsuyama A."/>
            <person name="Arai R."/>
            <person name="Yashiroda Y."/>
            <person name="Shirai A."/>
            <person name="Kamata A."/>
            <person name="Sekido S."/>
            <person name="Kobayashi Y."/>
            <person name="Hashimoto A."/>
            <person name="Hamamoto M."/>
            <person name="Hiraoka Y."/>
            <person name="Horinouchi S."/>
            <person name="Yoshida M."/>
        </authorList>
    </citation>
    <scope>SUBCELLULAR LOCATION [LARGE SCALE ANALYSIS]</scope>
</reference>
<name>ATC3_SCHPO</name>
<evidence type="ECO:0000250" key="1"/>
<evidence type="ECO:0000250" key="2">
    <source>
        <dbReference type="UniProtKB" id="C7EXK4"/>
    </source>
</evidence>
<evidence type="ECO:0000250" key="3">
    <source>
        <dbReference type="UniProtKB" id="P04191"/>
    </source>
</evidence>
<evidence type="ECO:0000250" key="4">
    <source>
        <dbReference type="UniProtKB" id="P32660"/>
    </source>
</evidence>
<evidence type="ECO:0000250" key="5">
    <source>
        <dbReference type="UniProtKB" id="P39524"/>
    </source>
</evidence>
<evidence type="ECO:0000250" key="6">
    <source>
        <dbReference type="UniProtKB" id="Q8NB49"/>
    </source>
</evidence>
<evidence type="ECO:0000250" key="7">
    <source>
        <dbReference type="UniProtKB" id="Q9Y2Q0"/>
    </source>
</evidence>
<evidence type="ECO:0000255" key="8"/>
<evidence type="ECO:0000256" key="9">
    <source>
        <dbReference type="SAM" id="MobiDB-lite"/>
    </source>
</evidence>
<evidence type="ECO:0000269" key="10">
    <source>
    </source>
</evidence>
<evidence type="ECO:0000305" key="11"/>
<keyword id="KW-0067">ATP-binding</keyword>
<keyword id="KW-0256">Endoplasmic reticulum</keyword>
<keyword id="KW-0333">Golgi apparatus</keyword>
<keyword id="KW-0446">Lipid-binding</keyword>
<keyword id="KW-0460">Magnesium</keyword>
<keyword id="KW-0472">Membrane</keyword>
<keyword id="KW-0479">Metal-binding</keyword>
<keyword id="KW-0547">Nucleotide-binding</keyword>
<keyword id="KW-0597">Phosphoprotein</keyword>
<keyword id="KW-1185">Reference proteome</keyword>
<keyword id="KW-1278">Translocase</keyword>
<keyword id="KW-0812">Transmembrane</keyword>
<keyword id="KW-1133">Transmembrane helix</keyword>
<accession>O94296</accession>